<organism>
    <name type="scientific">Mus musculus</name>
    <name type="common">Mouse</name>
    <dbReference type="NCBI Taxonomy" id="10090"/>
    <lineage>
        <taxon>Eukaryota</taxon>
        <taxon>Metazoa</taxon>
        <taxon>Chordata</taxon>
        <taxon>Craniata</taxon>
        <taxon>Vertebrata</taxon>
        <taxon>Euteleostomi</taxon>
        <taxon>Mammalia</taxon>
        <taxon>Eutheria</taxon>
        <taxon>Euarchontoglires</taxon>
        <taxon>Glires</taxon>
        <taxon>Rodentia</taxon>
        <taxon>Myomorpha</taxon>
        <taxon>Muroidea</taxon>
        <taxon>Muridae</taxon>
        <taxon>Murinae</taxon>
        <taxon>Mus</taxon>
        <taxon>Mus</taxon>
    </lineage>
</organism>
<comment type="function">
    <text evidence="2 5">Catalyzes the asymmetric hydrolysis of diadenosine 5',5'''-P1,P4-tetraphosphate (Ap4A) to yield AMP and ATP (By similarity). Exhibits decapping activity towards FAD-capped RNAs and dpCoA-capped RNAs in vitro (PubMed:32432673).</text>
</comment>
<comment type="catalytic activity">
    <reaction evidence="2">
        <text>P(1),P(4)-bis(5'-guanosyl) tetraphosphate + H2O = GMP + GTP + 2 H(+)</text>
        <dbReference type="Rhea" id="RHEA:22484"/>
        <dbReference type="ChEBI" id="CHEBI:15377"/>
        <dbReference type="ChEBI" id="CHEBI:15378"/>
        <dbReference type="ChEBI" id="CHEBI:37565"/>
        <dbReference type="ChEBI" id="CHEBI:57553"/>
        <dbReference type="ChEBI" id="CHEBI:58115"/>
        <dbReference type="EC" id="3.6.1.17"/>
    </reaction>
</comment>
<comment type="catalytic activity">
    <reaction evidence="7">
        <text>a 5'-end CoA-ribonucleoside in mRNA + H2O = a 5'-end phospho-adenosine-phospho-ribonucleoside in mRNA + (R)-4'-phosphopantetheine + 2 H(+)</text>
        <dbReference type="Rhea" id="RHEA:67592"/>
        <dbReference type="Rhea" id="RHEA-COMP:15719"/>
        <dbReference type="Rhea" id="RHEA-COMP:17276"/>
        <dbReference type="ChEBI" id="CHEBI:15377"/>
        <dbReference type="ChEBI" id="CHEBI:15378"/>
        <dbReference type="ChEBI" id="CHEBI:61723"/>
        <dbReference type="ChEBI" id="CHEBI:144051"/>
        <dbReference type="ChEBI" id="CHEBI:172371"/>
    </reaction>
    <physiologicalReaction direction="left-to-right" evidence="7">
        <dbReference type="Rhea" id="RHEA:67593"/>
    </physiologicalReaction>
</comment>
<comment type="catalytic activity">
    <reaction evidence="7">
        <text>a 5'-end FAD-phospho-ribonucleoside in mRNA + H2O = a 5'-end phospho-adenosine-phospho-ribonucleoside in mRNA + FMN + 2 H(+)</text>
        <dbReference type="Rhea" id="RHEA:67588"/>
        <dbReference type="Rhea" id="RHEA-COMP:15719"/>
        <dbReference type="Rhea" id="RHEA-COMP:17275"/>
        <dbReference type="ChEBI" id="CHEBI:15377"/>
        <dbReference type="ChEBI" id="CHEBI:15378"/>
        <dbReference type="ChEBI" id="CHEBI:58210"/>
        <dbReference type="ChEBI" id="CHEBI:144051"/>
        <dbReference type="ChEBI" id="CHEBI:172372"/>
    </reaction>
    <physiologicalReaction direction="left-to-right" evidence="7">
        <dbReference type="Rhea" id="RHEA:67589"/>
    </physiologicalReaction>
</comment>
<comment type="cofactor">
    <cofactor evidence="3">
        <name>a divalent metal cation</name>
        <dbReference type="ChEBI" id="CHEBI:60240"/>
    </cofactor>
    <text evidence="3">Divalent metal ions.</text>
</comment>
<comment type="similarity">
    <text evidence="6">Belongs to the Nudix hydrolase family.</text>
</comment>
<reference key="1">
    <citation type="journal article" date="2005" name="Science">
        <title>The transcriptional landscape of the mammalian genome.</title>
        <authorList>
            <person name="Carninci P."/>
            <person name="Kasukawa T."/>
            <person name="Katayama S."/>
            <person name="Gough J."/>
            <person name="Frith M.C."/>
            <person name="Maeda N."/>
            <person name="Oyama R."/>
            <person name="Ravasi T."/>
            <person name="Lenhard B."/>
            <person name="Wells C."/>
            <person name="Kodzius R."/>
            <person name="Shimokawa K."/>
            <person name="Bajic V.B."/>
            <person name="Brenner S.E."/>
            <person name="Batalov S."/>
            <person name="Forrest A.R."/>
            <person name="Zavolan M."/>
            <person name="Davis M.J."/>
            <person name="Wilming L.G."/>
            <person name="Aidinis V."/>
            <person name="Allen J.E."/>
            <person name="Ambesi-Impiombato A."/>
            <person name="Apweiler R."/>
            <person name="Aturaliya R.N."/>
            <person name="Bailey T.L."/>
            <person name="Bansal M."/>
            <person name="Baxter L."/>
            <person name="Beisel K.W."/>
            <person name="Bersano T."/>
            <person name="Bono H."/>
            <person name="Chalk A.M."/>
            <person name="Chiu K.P."/>
            <person name="Choudhary V."/>
            <person name="Christoffels A."/>
            <person name="Clutterbuck D.R."/>
            <person name="Crowe M.L."/>
            <person name="Dalla E."/>
            <person name="Dalrymple B.P."/>
            <person name="de Bono B."/>
            <person name="Della Gatta G."/>
            <person name="di Bernardo D."/>
            <person name="Down T."/>
            <person name="Engstrom P."/>
            <person name="Fagiolini M."/>
            <person name="Faulkner G."/>
            <person name="Fletcher C.F."/>
            <person name="Fukushima T."/>
            <person name="Furuno M."/>
            <person name="Futaki S."/>
            <person name="Gariboldi M."/>
            <person name="Georgii-Hemming P."/>
            <person name="Gingeras T.R."/>
            <person name="Gojobori T."/>
            <person name="Green R.E."/>
            <person name="Gustincich S."/>
            <person name="Harbers M."/>
            <person name="Hayashi Y."/>
            <person name="Hensch T.K."/>
            <person name="Hirokawa N."/>
            <person name="Hill D."/>
            <person name="Huminiecki L."/>
            <person name="Iacono M."/>
            <person name="Ikeo K."/>
            <person name="Iwama A."/>
            <person name="Ishikawa T."/>
            <person name="Jakt M."/>
            <person name="Kanapin A."/>
            <person name="Katoh M."/>
            <person name="Kawasawa Y."/>
            <person name="Kelso J."/>
            <person name="Kitamura H."/>
            <person name="Kitano H."/>
            <person name="Kollias G."/>
            <person name="Krishnan S.P."/>
            <person name="Kruger A."/>
            <person name="Kummerfeld S.K."/>
            <person name="Kurochkin I.V."/>
            <person name="Lareau L.F."/>
            <person name="Lazarevic D."/>
            <person name="Lipovich L."/>
            <person name="Liu J."/>
            <person name="Liuni S."/>
            <person name="McWilliam S."/>
            <person name="Madan Babu M."/>
            <person name="Madera M."/>
            <person name="Marchionni L."/>
            <person name="Matsuda H."/>
            <person name="Matsuzawa S."/>
            <person name="Miki H."/>
            <person name="Mignone F."/>
            <person name="Miyake S."/>
            <person name="Morris K."/>
            <person name="Mottagui-Tabar S."/>
            <person name="Mulder N."/>
            <person name="Nakano N."/>
            <person name="Nakauchi H."/>
            <person name="Ng P."/>
            <person name="Nilsson R."/>
            <person name="Nishiguchi S."/>
            <person name="Nishikawa S."/>
            <person name="Nori F."/>
            <person name="Ohara O."/>
            <person name="Okazaki Y."/>
            <person name="Orlando V."/>
            <person name="Pang K.C."/>
            <person name="Pavan W.J."/>
            <person name="Pavesi G."/>
            <person name="Pesole G."/>
            <person name="Petrovsky N."/>
            <person name="Piazza S."/>
            <person name="Reed J."/>
            <person name="Reid J.F."/>
            <person name="Ring B.Z."/>
            <person name="Ringwald M."/>
            <person name="Rost B."/>
            <person name="Ruan Y."/>
            <person name="Salzberg S.L."/>
            <person name="Sandelin A."/>
            <person name="Schneider C."/>
            <person name="Schoenbach C."/>
            <person name="Sekiguchi K."/>
            <person name="Semple C.A."/>
            <person name="Seno S."/>
            <person name="Sessa L."/>
            <person name="Sheng Y."/>
            <person name="Shibata Y."/>
            <person name="Shimada H."/>
            <person name="Shimada K."/>
            <person name="Silva D."/>
            <person name="Sinclair B."/>
            <person name="Sperling S."/>
            <person name="Stupka E."/>
            <person name="Sugiura K."/>
            <person name="Sultana R."/>
            <person name="Takenaka Y."/>
            <person name="Taki K."/>
            <person name="Tammoja K."/>
            <person name="Tan S.L."/>
            <person name="Tang S."/>
            <person name="Taylor M.S."/>
            <person name="Tegner J."/>
            <person name="Teichmann S.A."/>
            <person name="Ueda H.R."/>
            <person name="van Nimwegen E."/>
            <person name="Verardo R."/>
            <person name="Wei C.L."/>
            <person name="Yagi K."/>
            <person name="Yamanishi H."/>
            <person name="Zabarovsky E."/>
            <person name="Zhu S."/>
            <person name="Zimmer A."/>
            <person name="Hide W."/>
            <person name="Bult C."/>
            <person name="Grimmond S.M."/>
            <person name="Teasdale R.D."/>
            <person name="Liu E.T."/>
            <person name="Brusic V."/>
            <person name="Quackenbush J."/>
            <person name="Wahlestedt C."/>
            <person name="Mattick J.S."/>
            <person name="Hume D.A."/>
            <person name="Kai C."/>
            <person name="Sasaki D."/>
            <person name="Tomaru Y."/>
            <person name="Fukuda S."/>
            <person name="Kanamori-Katayama M."/>
            <person name="Suzuki M."/>
            <person name="Aoki J."/>
            <person name="Arakawa T."/>
            <person name="Iida J."/>
            <person name="Imamura K."/>
            <person name="Itoh M."/>
            <person name="Kato T."/>
            <person name="Kawaji H."/>
            <person name="Kawagashira N."/>
            <person name="Kawashima T."/>
            <person name="Kojima M."/>
            <person name="Kondo S."/>
            <person name="Konno H."/>
            <person name="Nakano K."/>
            <person name="Ninomiya N."/>
            <person name="Nishio T."/>
            <person name="Okada M."/>
            <person name="Plessy C."/>
            <person name="Shibata K."/>
            <person name="Shiraki T."/>
            <person name="Suzuki S."/>
            <person name="Tagami M."/>
            <person name="Waki K."/>
            <person name="Watahiki A."/>
            <person name="Okamura-Oho Y."/>
            <person name="Suzuki H."/>
            <person name="Kawai J."/>
            <person name="Hayashizaki Y."/>
        </authorList>
    </citation>
    <scope>NUCLEOTIDE SEQUENCE [LARGE SCALE MRNA]</scope>
    <source>
        <strain>C57BL/6J</strain>
        <tissue>Cerebellum</tissue>
        <tissue>Tongue</tissue>
    </source>
</reference>
<reference key="2">
    <citation type="journal article" date="2004" name="Genome Res.">
        <title>The status, quality, and expansion of the NIH full-length cDNA project: the Mammalian Gene Collection (MGC).</title>
        <authorList>
            <consortium name="The MGC Project Team"/>
        </authorList>
    </citation>
    <scope>NUCLEOTIDE SEQUENCE [LARGE SCALE MRNA]</scope>
    <source>
        <strain>FVB/N</strain>
        <tissue>Kidney</tissue>
    </source>
</reference>
<reference key="3">
    <citation type="submission" date="2009-01" db="UniProtKB">
        <authorList>
            <person name="Lubec G."/>
            <person name="Sunyer B."/>
            <person name="Chen W.-Q."/>
        </authorList>
    </citation>
    <scope>PROTEIN SEQUENCE OF 5-12; 43-57; 61-77; 90-99 AND 116-129</scope>
    <scope>IDENTIFICATION BY MASS SPECTROMETRY</scope>
    <source>
        <strain>OF1</strain>
        <tissue>Hippocampus</tissue>
    </source>
</reference>
<reference key="4">
    <citation type="journal article" date="2010" name="Cell">
        <title>A tissue-specific atlas of mouse protein phosphorylation and expression.</title>
        <authorList>
            <person name="Huttlin E.L."/>
            <person name="Jedrychowski M.P."/>
            <person name="Elias J.E."/>
            <person name="Goswami T."/>
            <person name="Rad R."/>
            <person name="Beausoleil S.A."/>
            <person name="Villen J."/>
            <person name="Haas W."/>
            <person name="Sowa M.E."/>
            <person name="Gygi S.P."/>
        </authorList>
    </citation>
    <scope>IDENTIFICATION BY MASS SPECTROMETRY [LARGE SCALE ANALYSIS]</scope>
    <source>
        <tissue>Brain</tissue>
        <tissue>Brown adipose tissue</tissue>
        <tissue>Heart</tissue>
        <tissue>Kidney</tissue>
        <tissue>Liver</tissue>
        <tissue>Lung</tissue>
        <tissue>Pancreas</tissue>
        <tissue>Spleen</tissue>
        <tissue>Testis</tissue>
    </source>
</reference>
<reference key="5">
    <citation type="journal article" date="2020" name="Nucleic Acids Res.">
        <title>Mammalian Nudix proteins cleave nucleotide metabolite caps on RNAs.</title>
        <authorList>
            <person name="Sharma S."/>
            <person name="Grudzien-Nogalska E."/>
            <person name="Hamilton K."/>
            <person name="Jiao X."/>
            <person name="Yang J."/>
            <person name="Tong L."/>
            <person name="Kiledjian M."/>
        </authorList>
    </citation>
    <scope>FUNCTION</scope>
    <scope>CATALYTIC ACTIVITY</scope>
</reference>
<accession>P56380</accession>
<accession>Q9D2U6</accession>
<accession>Q9D6V2</accession>
<feature type="initiator methionine" description="Removed" evidence="1">
    <location>
        <position position="1"/>
    </location>
</feature>
<feature type="chain" id="PRO_0000057103" description="Bis(5'-nucleosyl)-tetraphosphatase [asymmetrical]">
    <location>
        <begin position="2"/>
        <end position="147"/>
    </location>
</feature>
<feature type="domain" description="Nudix hydrolase" evidence="4">
    <location>
        <begin position="2"/>
        <end position="139"/>
    </location>
</feature>
<feature type="short sequence motif" description="Nudix box">
    <location>
        <begin position="43"/>
        <end position="64"/>
    </location>
</feature>
<feature type="modified residue" description="N-acetylalanine" evidence="1">
    <location>
        <position position="2"/>
    </location>
</feature>
<feature type="sequence conflict" description="In Ref. 1; BAB31399." evidence="6" ref="1">
    <original>M</original>
    <variation>V</variation>
    <location>
        <position position="19"/>
    </location>
</feature>
<protein>
    <recommendedName>
        <fullName>Bis(5'-nucleosyl)-tetraphosphatase [asymmetrical]</fullName>
        <ecNumber evidence="2">3.6.1.17</ecNumber>
    </recommendedName>
    <alternativeName>
        <fullName>Diadenosine 5',5'''-P1,P4-tetraphosphate asymmetrical hydrolase</fullName>
        <shortName>Ap4A hydrolase</shortName>
        <shortName>Ap4Aase</shortName>
        <shortName>Diadenosine tetraphosphatase</shortName>
    </alternativeName>
    <alternativeName>
        <fullName>Nucleoside diphosphate-linked moiety X motif 2</fullName>
        <shortName>Nudix motif 2</shortName>
    </alternativeName>
</protein>
<gene>
    <name type="primary">Nudt2</name>
    <name type="synonym">Apah1</name>
</gene>
<evidence type="ECO:0000250" key="1">
    <source>
        <dbReference type="UniProtKB" id="P50583"/>
    </source>
</evidence>
<evidence type="ECO:0000250" key="2">
    <source>
        <dbReference type="UniProtKB" id="P50584"/>
    </source>
</evidence>
<evidence type="ECO:0000250" key="3">
    <source>
        <dbReference type="UniProtKB" id="Q9U2M7"/>
    </source>
</evidence>
<evidence type="ECO:0000255" key="4">
    <source>
        <dbReference type="PROSITE-ProRule" id="PRU00794"/>
    </source>
</evidence>
<evidence type="ECO:0000269" key="5">
    <source>
    </source>
</evidence>
<evidence type="ECO:0000305" key="6"/>
<evidence type="ECO:0000305" key="7">
    <source>
    </source>
</evidence>
<sequence>MALRACGLIIFRRHLIPKMDNSTIEFLLLQASDGIHHWTPPKGHVDPGENDLETALRETREETGIEASQLTIIEGFRRELNYVARQKPKTVIYWLAEVKDYNVEIRLSQEHQAYRWLGLEEACQLAQFKEMKATLQEGHQFLCSTPA</sequence>
<name>AP4A_MOUSE</name>
<dbReference type="EC" id="3.6.1.17" evidence="2"/>
<dbReference type="EMBL" id="AK009933">
    <property type="protein sequence ID" value="BAB26592.1"/>
    <property type="molecule type" value="mRNA"/>
</dbReference>
<dbReference type="EMBL" id="AK018771">
    <property type="protein sequence ID" value="BAB31399.1"/>
    <property type="molecule type" value="mRNA"/>
</dbReference>
<dbReference type="EMBL" id="BC025153">
    <property type="protein sequence ID" value="AAH25153.1"/>
    <property type="molecule type" value="mRNA"/>
</dbReference>
<dbReference type="CCDS" id="CCDS18061.1"/>
<dbReference type="RefSeq" id="NP_079815.2">
    <property type="nucleotide sequence ID" value="NM_025539.2"/>
</dbReference>
<dbReference type="RefSeq" id="XP_006538228.1">
    <property type="nucleotide sequence ID" value="XM_006538165.4"/>
</dbReference>
<dbReference type="RefSeq" id="XP_011248384.1">
    <property type="nucleotide sequence ID" value="XM_011250082.4"/>
</dbReference>
<dbReference type="RefSeq" id="XP_011248385.1">
    <property type="nucleotide sequence ID" value="XM_011250083.1"/>
</dbReference>
<dbReference type="RefSeq" id="XP_030109557.1">
    <property type="nucleotide sequence ID" value="XM_030253697.2"/>
</dbReference>
<dbReference type="RefSeq" id="XP_036020201.1">
    <property type="nucleotide sequence ID" value="XM_036164308.1"/>
</dbReference>
<dbReference type="SMR" id="P56380"/>
<dbReference type="BioGRID" id="211445">
    <property type="interactions" value="1"/>
</dbReference>
<dbReference type="FunCoup" id="P56380">
    <property type="interactions" value="872"/>
</dbReference>
<dbReference type="STRING" id="10090.ENSMUSP00000030154"/>
<dbReference type="GlyGen" id="P56380">
    <property type="glycosylation" value="1 site, 1 O-linked glycan (1 site)"/>
</dbReference>
<dbReference type="iPTMnet" id="P56380"/>
<dbReference type="PhosphoSitePlus" id="P56380"/>
<dbReference type="jPOST" id="P56380"/>
<dbReference type="PaxDb" id="10090-ENSMUSP00000030154"/>
<dbReference type="PeptideAtlas" id="P56380"/>
<dbReference type="ProteomicsDB" id="296212"/>
<dbReference type="Pumba" id="P56380"/>
<dbReference type="Antibodypedia" id="25392">
    <property type="antibodies" value="195 antibodies from 26 providers"/>
</dbReference>
<dbReference type="DNASU" id="66401"/>
<dbReference type="Ensembl" id="ENSMUST00000030154.7">
    <property type="protein sequence ID" value="ENSMUSP00000030154.7"/>
    <property type="gene ID" value="ENSMUSG00000028443.7"/>
</dbReference>
<dbReference type="GeneID" id="66401"/>
<dbReference type="KEGG" id="mmu:66401"/>
<dbReference type="UCSC" id="uc008sis.1">
    <property type="organism name" value="mouse"/>
</dbReference>
<dbReference type="AGR" id="MGI:1913651"/>
<dbReference type="CTD" id="318"/>
<dbReference type="MGI" id="MGI:1913651">
    <property type="gene designation" value="Nudt2"/>
</dbReference>
<dbReference type="VEuPathDB" id="HostDB:ENSMUSG00000028443"/>
<dbReference type="eggNOG" id="KOG2839">
    <property type="taxonomic scope" value="Eukaryota"/>
</dbReference>
<dbReference type="GeneTree" id="ENSGT00390000002416"/>
<dbReference type="HOGENOM" id="CLU_037162_14_5_1"/>
<dbReference type="InParanoid" id="P56380"/>
<dbReference type="OMA" id="WRDYEQA"/>
<dbReference type="OrthoDB" id="276276at2759"/>
<dbReference type="PhylomeDB" id="P56380"/>
<dbReference type="TreeFam" id="TF105958"/>
<dbReference type="Reactome" id="R-MMU-3299685">
    <property type="pathway name" value="Detoxification of Reactive Oxygen Species"/>
</dbReference>
<dbReference type="BioGRID-ORCS" id="66401">
    <property type="hits" value="2 hits in 76 CRISPR screens"/>
</dbReference>
<dbReference type="ChiTaRS" id="Nudt2">
    <property type="organism name" value="mouse"/>
</dbReference>
<dbReference type="PRO" id="PR:P56380"/>
<dbReference type="Proteomes" id="UP000000589">
    <property type="component" value="Chromosome 4"/>
</dbReference>
<dbReference type="RNAct" id="P56380">
    <property type="molecule type" value="protein"/>
</dbReference>
<dbReference type="Bgee" id="ENSMUSG00000028443">
    <property type="expression patterns" value="Expressed in barrel cortex and 260 other cell types or tissues"/>
</dbReference>
<dbReference type="GO" id="GO:0005739">
    <property type="term" value="C:mitochondrion"/>
    <property type="evidence" value="ECO:0007005"/>
    <property type="project" value="MGI"/>
</dbReference>
<dbReference type="GO" id="GO:0004081">
    <property type="term" value="F:bis(5'-nucleosyl)-tetraphosphatase (asymmetrical) activity"/>
    <property type="evidence" value="ECO:0000250"/>
    <property type="project" value="UniProtKB"/>
</dbReference>
<dbReference type="GO" id="GO:0005525">
    <property type="term" value="F:GTP binding"/>
    <property type="evidence" value="ECO:0007669"/>
    <property type="project" value="UniProtKB-KW"/>
</dbReference>
<dbReference type="GO" id="GO:0006915">
    <property type="term" value="P:apoptotic process"/>
    <property type="evidence" value="ECO:0000250"/>
    <property type="project" value="UniProtKB"/>
</dbReference>
<dbReference type="CDD" id="cd03428">
    <property type="entry name" value="NUDIX_Ap4A_Nudt2"/>
    <property type="match status" value="1"/>
</dbReference>
<dbReference type="FunFam" id="3.90.79.10:FF:000037">
    <property type="entry name" value="Nudix hydrolase 2"/>
    <property type="match status" value="1"/>
</dbReference>
<dbReference type="Gene3D" id="3.90.79.10">
    <property type="entry name" value="Nucleoside Triphosphate Pyrophosphohydrolase"/>
    <property type="match status" value="1"/>
</dbReference>
<dbReference type="InterPro" id="IPR015797">
    <property type="entry name" value="NUDIX_hydrolase-like_dom_sf"/>
</dbReference>
<dbReference type="InterPro" id="IPR020084">
    <property type="entry name" value="NUDIX_hydrolase_CS"/>
</dbReference>
<dbReference type="InterPro" id="IPR000086">
    <property type="entry name" value="NUDIX_hydrolase_dom"/>
</dbReference>
<dbReference type="InterPro" id="IPR051325">
    <property type="entry name" value="Nudix_hydrolase_domain"/>
</dbReference>
<dbReference type="InterPro" id="IPR003565">
    <property type="entry name" value="Tetra_PHTase"/>
</dbReference>
<dbReference type="PANTHER" id="PTHR21340:SF0">
    <property type="entry name" value="BIS(5'-NUCLEOSYL)-TETRAPHOSPHATASE [ASYMMETRICAL]"/>
    <property type="match status" value="1"/>
</dbReference>
<dbReference type="PANTHER" id="PTHR21340">
    <property type="entry name" value="DIADENOSINE 5,5-P1,P4-TETRAPHOSPHATE PYROPHOSPHOHYDROLASE MUTT"/>
    <property type="match status" value="1"/>
</dbReference>
<dbReference type="Pfam" id="PF00293">
    <property type="entry name" value="NUDIX"/>
    <property type="match status" value="1"/>
</dbReference>
<dbReference type="PRINTS" id="PR01405">
    <property type="entry name" value="TETRPHPHTASE"/>
</dbReference>
<dbReference type="SUPFAM" id="SSF55811">
    <property type="entry name" value="Nudix"/>
    <property type="match status" value="1"/>
</dbReference>
<dbReference type="PROSITE" id="PS51462">
    <property type="entry name" value="NUDIX"/>
    <property type="match status" value="1"/>
</dbReference>
<dbReference type="PROSITE" id="PS00893">
    <property type="entry name" value="NUDIX_BOX"/>
    <property type="match status" value="1"/>
</dbReference>
<keyword id="KW-0007">Acetylation</keyword>
<keyword id="KW-0903">Direct protein sequencing</keyword>
<keyword id="KW-0342">GTP-binding</keyword>
<keyword id="KW-0378">Hydrolase</keyword>
<keyword id="KW-0547">Nucleotide-binding</keyword>
<keyword id="KW-1185">Reference proteome</keyword>
<proteinExistence type="evidence at protein level"/>